<reference key="1">
    <citation type="journal article" date="1999" name="Nat. Genet.">
        <title>Comparative genomes of Chlamydia pneumoniae and C. trachomatis.</title>
        <authorList>
            <person name="Kalman S."/>
            <person name="Mitchell W.P."/>
            <person name="Marathe R."/>
            <person name="Lammel C.J."/>
            <person name="Fan J."/>
            <person name="Hyman R.W."/>
            <person name="Olinger L."/>
            <person name="Grimwood J."/>
            <person name="Davis R.W."/>
            <person name="Stephens R.S."/>
        </authorList>
    </citation>
    <scope>NUCLEOTIDE SEQUENCE [LARGE SCALE GENOMIC DNA]</scope>
    <source>
        <strain>CWL029</strain>
    </source>
</reference>
<reference key="2">
    <citation type="journal article" date="2000" name="Nucleic Acids Res.">
        <title>Genome sequences of Chlamydia trachomatis MoPn and Chlamydia pneumoniae AR39.</title>
        <authorList>
            <person name="Read T.D."/>
            <person name="Brunham R.C."/>
            <person name="Shen C."/>
            <person name="Gill S.R."/>
            <person name="Heidelberg J.F."/>
            <person name="White O."/>
            <person name="Hickey E.K."/>
            <person name="Peterson J.D."/>
            <person name="Utterback T.R."/>
            <person name="Berry K.J."/>
            <person name="Bass S."/>
            <person name="Linher K.D."/>
            <person name="Weidman J.F."/>
            <person name="Khouri H.M."/>
            <person name="Craven B."/>
            <person name="Bowman C."/>
            <person name="Dodson R.J."/>
            <person name="Gwinn M.L."/>
            <person name="Nelson W.C."/>
            <person name="DeBoy R.T."/>
            <person name="Kolonay J.F."/>
            <person name="McClarty G."/>
            <person name="Salzberg S.L."/>
            <person name="Eisen J.A."/>
            <person name="Fraser C.M."/>
        </authorList>
    </citation>
    <scope>NUCLEOTIDE SEQUENCE [LARGE SCALE GENOMIC DNA]</scope>
    <source>
        <strain>AR39</strain>
    </source>
</reference>
<reference key="3">
    <citation type="journal article" date="2000" name="Nucleic Acids Res.">
        <title>Comparison of whole genome sequences of Chlamydia pneumoniae J138 from Japan and CWL029 from USA.</title>
        <authorList>
            <person name="Shirai M."/>
            <person name="Hirakawa H."/>
            <person name="Kimoto M."/>
            <person name="Tabuchi M."/>
            <person name="Kishi F."/>
            <person name="Ouchi K."/>
            <person name="Shiba T."/>
            <person name="Ishii K."/>
            <person name="Hattori M."/>
            <person name="Kuhara S."/>
            <person name="Nakazawa T."/>
        </authorList>
    </citation>
    <scope>NUCLEOTIDE SEQUENCE [LARGE SCALE GENOMIC DNA]</scope>
    <source>
        <strain>J138</strain>
    </source>
</reference>
<reference key="4">
    <citation type="submission" date="2002-05" db="EMBL/GenBank/DDBJ databases">
        <title>The genome sequence of Chlamydia pneumoniae TW183 and comparison with other Chlamydia strains based on whole genome sequence analysis.</title>
        <authorList>
            <person name="Geng M.M."/>
            <person name="Schuhmacher A."/>
            <person name="Muehldorfer I."/>
            <person name="Bensch K.W."/>
            <person name="Schaefer K.P."/>
            <person name="Schneider S."/>
            <person name="Pohl T."/>
            <person name="Essig A."/>
            <person name="Marre R."/>
            <person name="Melchers K."/>
        </authorList>
    </citation>
    <scope>NUCLEOTIDE SEQUENCE [LARGE SCALE GENOMIC DNA]</scope>
    <source>
        <strain>TW-183</strain>
    </source>
</reference>
<accession>Q9Z969</accession>
<accession>Q9JQC4</accession>
<comment type="subunit">
    <text evidence="1">Part of the 50S ribosomal subunit.</text>
</comment>
<comment type="similarity">
    <text evidence="1">Belongs to the bacterial ribosomal protein bL31 family. Type B subfamily.</text>
</comment>
<feature type="chain" id="PRO_0000173217" description="Large ribosomal subunit protein bL31B">
    <location>
        <begin position="1"/>
        <end position="109"/>
    </location>
</feature>
<feature type="region of interest" description="Disordered" evidence="2">
    <location>
        <begin position="79"/>
        <end position="109"/>
    </location>
</feature>
<feature type="compositionally biased region" description="Basic residues" evidence="2">
    <location>
        <begin position="98"/>
        <end position="109"/>
    </location>
</feature>
<keyword id="KW-0687">Ribonucleoprotein</keyword>
<keyword id="KW-0689">Ribosomal protein</keyword>
<name>RL31B_CHLPN</name>
<organism>
    <name type="scientific">Chlamydia pneumoniae</name>
    <name type="common">Chlamydophila pneumoniae</name>
    <dbReference type="NCBI Taxonomy" id="83558"/>
    <lineage>
        <taxon>Bacteria</taxon>
        <taxon>Pseudomonadati</taxon>
        <taxon>Chlamydiota</taxon>
        <taxon>Chlamydiia</taxon>
        <taxon>Chlamydiales</taxon>
        <taxon>Chlamydiaceae</taxon>
        <taxon>Chlamydia/Chlamydophila group</taxon>
        <taxon>Chlamydia</taxon>
    </lineage>
</organism>
<sequence>MKKNTHPEYRQVLFVDSSTGYKFVCGSTYQSEKTEVFEGKEYPVCYVSVSSSSHPFFTGSKKFVDAEGRVDKFLKRYSNVRQPAQQPQPEEDALPAAKGKKKVVTKKKK</sequence>
<dbReference type="EMBL" id="AE001363">
    <property type="protein sequence ID" value="AAD18265.1"/>
    <property type="molecule type" value="Genomic_DNA"/>
</dbReference>
<dbReference type="EMBL" id="AE002161">
    <property type="protein sequence ID" value="AAF38473.1"/>
    <property type="molecule type" value="Genomic_DNA"/>
</dbReference>
<dbReference type="EMBL" id="BA000008">
    <property type="protein sequence ID" value="BAA98323.1"/>
    <property type="molecule type" value="Genomic_DNA"/>
</dbReference>
<dbReference type="EMBL" id="AE009440">
    <property type="protein sequence ID" value="AAP98046.1"/>
    <property type="molecule type" value="Genomic_DNA"/>
</dbReference>
<dbReference type="PIR" id="A86505">
    <property type="entry name" value="A86505"/>
</dbReference>
<dbReference type="PIR" id="H72118">
    <property type="entry name" value="H72118"/>
</dbReference>
<dbReference type="RefSeq" id="NP_224320.1">
    <property type="nucleotide sequence ID" value="NC_000922.1"/>
</dbReference>
<dbReference type="RefSeq" id="WP_010882762.1">
    <property type="nucleotide sequence ID" value="NZ_LN847257.1"/>
</dbReference>
<dbReference type="SMR" id="Q9Z969"/>
<dbReference type="STRING" id="406984.CPK_ORF00624"/>
<dbReference type="GeneID" id="45050157"/>
<dbReference type="KEGG" id="cpa:CP_0661"/>
<dbReference type="KEGG" id="cpj:rl31"/>
<dbReference type="KEGG" id="cpn:CPn_0112"/>
<dbReference type="KEGG" id="cpt:CpB0113"/>
<dbReference type="PATRIC" id="fig|115713.3.peg.127"/>
<dbReference type="eggNOG" id="COG0254">
    <property type="taxonomic scope" value="Bacteria"/>
</dbReference>
<dbReference type="HOGENOM" id="CLU_114306_2_0_0"/>
<dbReference type="OMA" id="YRLVAFK"/>
<dbReference type="OrthoDB" id="9803251at2"/>
<dbReference type="Proteomes" id="UP000000583">
    <property type="component" value="Chromosome"/>
</dbReference>
<dbReference type="Proteomes" id="UP000000801">
    <property type="component" value="Chromosome"/>
</dbReference>
<dbReference type="GO" id="GO:1990904">
    <property type="term" value="C:ribonucleoprotein complex"/>
    <property type="evidence" value="ECO:0007669"/>
    <property type="project" value="UniProtKB-KW"/>
</dbReference>
<dbReference type="GO" id="GO:0005840">
    <property type="term" value="C:ribosome"/>
    <property type="evidence" value="ECO:0007669"/>
    <property type="project" value="UniProtKB-KW"/>
</dbReference>
<dbReference type="GO" id="GO:0003735">
    <property type="term" value="F:structural constituent of ribosome"/>
    <property type="evidence" value="ECO:0007669"/>
    <property type="project" value="InterPro"/>
</dbReference>
<dbReference type="GO" id="GO:0006412">
    <property type="term" value="P:translation"/>
    <property type="evidence" value="ECO:0007669"/>
    <property type="project" value="UniProtKB-UniRule"/>
</dbReference>
<dbReference type="Gene3D" id="4.10.830.30">
    <property type="entry name" value="Ribosomal protein L31"/>
    <property type="match status" value="1"/>
</dbReference>
<dbReference type="HAMAP" id="MF_00502">
    <property type="entry name" value="Ribosomal_bL31_2"/>
    <property type="match status" value="1"/>
</dbReference>
<dbReference type="InterPro" id="IPR034704">
    <property type="entry name" value="Ribosomal_bL28/bL31-like_sf"/>
</dbReference>
<dbReference type="InterPro" id="IPR002150">
    <property type="entry name" value="Ribosomal_bL31"/>
</dbReference>
<dbReference type="InterPro" id="IPR027493">
    <property type="entry name" value="Ribosomal_bL31_B"/>
</dbReference>
<dbReference type="InterPro" id="IPR042105">
    <property type="entry name" value="Ribosomal_bL31_sf"/>
</dbReference>
<dbReference type="NCBIfam" id="TIGR00105">
    <property type="entry name" value="L31"/>
    <property type="match status" value="1"/>
</dbReference>
<dbReference type="NCBIfam" id="NF002462">
    <property type="entry name" value="PRK01678.1"/>
    <property type="match status" value="1"/>
</dbReference>
<dbReference type="PANTHER" id="PTHR33280">
    <property type="entry name" value="50S RIBOSOMAL PROTEIN L31, CHLOROPLASTIC"/>
    <property type="match status" value="1"/>
</dbReference>
<dbReference type="PANTHER" id="PTHR33280:SF1">
    <property type="entry name" value="LARGE RIBOSOMAL SUBUNIT PROTEIN BL31C"/>
    <property type="match status" value="1"/>
</dbReference>
<dbReference type="Pfam" id="PF01197">
    <property type="entry name" value="Ribosomal_L31"/>
    <property type="match status" value="1"/>
</dbReference>
<dbReference type="PRINTS" id="PR01249">
    <property type="entry name" value="RIBOSOMALL31"/>
</dbReference>
<dbReference type="SUPFAM" id="SSF143800">
    <property type="entry name" value="L28p-like"/>
    <property type="match status" value="1"/>
</dbReference>
<dbReference type="PROSITE" id="PS01143">
    <property type="entry name" value="RIBOSOMAL_L31"/>
    <property type="match status" value="1"/>
</dbReference>
<protein>
    <recommendedName>
        <fullName evidence="1">Large ribosomal subunit protein bL31B</fullName>
    </recommendedName>
    <alternativeName>
        <fullName evidence="3">50S ribosomal protein L31 type B</fullName>
    </alternativeName>
</protein>
<evidence type="ECO:0000255" key="1">
    <source>
        <dbReference type="HAMAP-Rule" id="MF_00502"/>
    </source>
</evidence>
<evidence type="ECO:0000256" key="2">
    <source>
        <dbReference type="SAM" id="MobiDB-lite"/>
    </source>
</evidence>
<evidence type="ECO:0000305" key="3"/>
<proteinExistence type="inferred from homology"/>
<gene>
    <name evidence="1" type="primary">rpmE2</name>
    <name type="synonym">rl31</name>
    <name type="ordered locus">CPn_0112</name>
    <name type="ordered locus">CP_0661</name>
    <name type="ordered locus">CPj0112</name>
    <name type="ordered locus">CpB0113</name>
</gene>